<feature type="chain" id="PRO_1000046657" description="UPF0301 protein FTH_1193">
    <location>
        <begin position="1"/>
        <end position="194"/>
    </location>
</feature>
<accession>Q0BLI0</accession>
<sequence>MYQNHKSEILLATPLIKDDIVFTKSVVYLCQNDRHGAMGLIINKPLADTLKDVFEELHIPHTNTFKEILEYPLYMGGPISPHKIMILHTTNGRNYTSTIKLDEGLAITASIDILEDIANNILPEYFLPVVGYSCWTANQLTDEIKSNDWIVTNKLNKKILFNHENKVKWQNHLEHAGYTLQSLDTLFNRNTGNC</sequence>
<organism>
    <name type="scientific">Francisella tularensis subsp. holarctica (strain OSU18)</name>
    <dbReference type="NCBI Taxonomy" id="393011"/>
    <lineage>
        <taxon>Bacteria</taxon>
        <taxon>Pseudomonadati</taxon>
        <taxon>Pseudomonadota</taxon>
        <taxon>Gammaproteobacteria</taxon>
        <taxon>Thiotrichales</taxon>
        <taxon>Francisellaceae</taxon>
        <taxon>Francisella</taxon>
    </lineage>
</organism>
<reference key="1">
    <citation type="journal article" date="2006" name="J. Bacteriol.">
        <title>Chromosome rearrangement and diversification of Francisella tularensis revealed by the type B (OSU18) genome sequence.</title>
        <authorList>
            <person name="Petrosino J.F."/>
            <person name="Xiang Q."/>
            <person name="Karpathy S.E."/>
            <person name="Jiang H."/>
            <person name="Yerrapragada S."/>
            <person name="Liu Y."/>
            <person name="Gioia J."/>
            <person name="Hemphill L."/>
            <person name="Gonzalez A."/>
            <person name="Raghavan T.M."/>
            <person name="Uzman A."/>
            <person name="Fox G.E."/>
            <person name="Highlander S."/>
            <person name="Reichard M."/>
            <person name="Morton R.J."/>
            <person name="Clinkenbeard K.D."/>
            <person name="Weinstock G.M."/>
        </authorList>
    </citation>
    <scope>NUCLEOTIDE SEQUENCE [LARGE SCALE GENOMIC DNA]</scope>
    <source>
        <strain>OSU18</strain>
    </source>
</reference>
<protein>
    <recommendedName>
        <fullName evidence="1">UPF0301 protein FTH_1193</fullName>
    </recommendedName>
</protein>
<gene>
    <name type="ordered locus">FTH_1193</name>
</gene>
<dbReference type="EMBL" id="CP000437">
    <property type="protein sequence ID" value="ABI83054.1"/>
    <property type="molecule type" value="Genomic_DNA"/>
</dbReference>
<dbReference type="RefSeq" id="WP_003021066.1">
    <property type="nucleotide sequence ID" value="NC_017463.1"/>
</dbReference>
<dbReference type="SMR" id="Q0BLI0"/>
<dbReference type="KEGG" id="fth:FTH_1193"/>
<dbReference type="GO" id="GO:0005829">
    <property type="term" value="C:cytosol"/>
    <property type="evidence" value="ECO:0007669"/>
    <property type="project" value="TreeGrafter"/>
</dbReference>
<dbReference type="Gene3D" id="3.40.1740.10">
    <property type="entry name" value="VC0467-like"/>
    <property type="match status" value="1"/>
</dbReference>
<dbReference type="Gene3D" id="3.30.70.1300">
    <property type="entry name" value="VC0467-like domains"/>
    <property type="match status" value="1"/>
</dbReference>
<dbReference type="HAMAP" id="MF_00758">
    <property type="entry name" value="UPF0301"/>
    <property type="match status" value="1"/>
</dbReference>
<dbReference type="InterPro" id="IPR003774">
    <property type="entry name" value="AlgH-like"/>
</dbReference>
<dbReference type="PANTHER" id="PTHR30327">
    <property type="entry name" value="UNCHARACTERIZED PROTEIN YQGE"/>
    <property type="match status" value="1"/>
</dbReference>
<dbReference type="PANTHER" id="PTHR30327:SF1">
    <property type="entry name" value="UPF0301 PROTEIN YQGE"/>
    <property type="match status" value="1"/>
</dbReference>
<dbReference type="Pfam" id="PF02622">
    <property type="entry name" value="DUF179"/>
    <property type="match status" value="1"/>
</dbReference>
<dbReference type="SUPFAM" id="SSF143456">
    <property type="entry name" value="VC0467-like"/>
    <property type="match status" value="1"/>
</dbReference>
<comment type="similarity">
    <text evidence="1">Belongs to the UPF0301 (AlgH) family.</text>
</comment>
<evidence type="ECO:0000255" key="1">
    <source>
        <dbReference type="HAMAP-Rule" id="MF_00758"/>
    </source>
</evidence>
<proteinExistence type="inferred from homology"/>
<name>Y1193_FRATO</name>